<proteinExistence type="inferred from homology"/>
<keyword id="KW-0378">Hydrolase</keyword>
<keyword id="KW-0441">Lipid A biosynthesis</keyword>
<keyword id="KW-0444">Lipid biosynthesis</keyword>
<keyword id="KW-0443">Lipid metabolism</keyword>
<keyword id="KW-0479">Metal-binding</keyword>
<keyword id="KW-1185">Reference proteome</keyword>
<keyword id="KW-0862">Zinc</keyword>
<accession>A9BUL2</accession>
<name>LPXC_DELAS</name>
<dbReference type="EC" id="3.5.1.108" evidence="1"/>
<dbReference type="EMBL" id="CP000884">
    <property type="protein sequence ID" value="ABX34120.1"/>
    <property type="molecule type" value="Genomic_DNA"/>
</dbReference>
<dbReference type="RefSeq" id="WP_012203406.1">
    <property type="nucleotide sequence ID" value="NC_010002.1"/>
</dbReference>
<dbReference type="SMR" id="A9BUL2"/>
<dbReference type="STRING" id="398578.Daci_1476"/>
<dbReference type="GeneID" id="94694749"/>
<dbReference type="KEGG" id="dac:Daci_1476"/>
<dbReference type="eggNOG" id="COG0774">
    <property type="taxonomic scope" value="Bacteria"/>
</dbReference>
<dbReference type="HOGENOM" id="CLU_046528_1_0_4"/>
<dbReference type="UniPathway" id="UPA00359">
    <property type="reaction ID" value="UER00478"/>
</dbReference>
<dbReference type="Proteomes" id="UP000000784">
    <property type="component" value="Chromosome"/>
</dbReference>
<dbReference type="GO" id="GO:0016020">
    <property type="term" value="C:membrane"/>
    <property type="evidence" value="ECO:0007669"/>
    <property type="project" value="GOC"/>
</dbReference>
<dbReference type="GO" id="GO:0046872">
    <property type="term" value="F:metal ion binding"/>
    <property type="evidence" value="ECO:0007669"/>
    <property type="project" value="UniProtKB-KW"/>
</dbReference>
<dbReference type="GO" id="GO:0103117">
    <property type="term" value="F:UDP-3-O-acyl-N-acetylglucosamine deacetylase activity"/>
    <property type="evidence" value="ECO:0007669"/>
    <property type="project" value="UniProtKB-UniRule"/>
</dbReference>
<dbReference type="GO" id="GO:0009245">
    <property type="term" value="P:lipid A biosynthetic process"/>
    <property type="evidence" value="ECO:0007669"/>
    <property type="project" value="UniProtKB-UniRule"/>
</dbReference>
<dbReference type="Gene3D" id="3.30.230.20">
    <property type="entry name" value="lpxc deacetylase, domain 1"/>
    <property type="match status" value="1"/>
</dbReference>
<dbReference type="Gene3D" id="3.30.1700.10">
    <property type="entry name" value="lpxc deacetylase, domain 2"/>
    <property type="match status" value="1"/>
</dbReference>
<dbReference type="HAMAP" id="MF_00388">
    <property type="entry name" value="LpxC"/>
    <property type="match status" value="1"/>
</dbReference>
<dbReference type="InterPro" id="IPR020568">
    <property type="entry name" value="Ribosomal_Su5_D2-typ_SF"/>
</dbReference>
<dbReference type="InterPro" id="IPR004463">
    <property type="entry name" value="UDP-acyl_GlcNac_deAcase"/>
</dbReference>
<dbReference type="InterPro" id="IPR011334">
    <property type="entry name" value="UDP-acyl_GlcNac_deAcase_C"/>
</dbReference>
<dbReference type="InterPro" id="IPR015870">
    <property type="entry name" value="UDP-acyl_N-AcGlcN_deAcase_N"/>
</dbReference>
<dbReference type="NCBIfam" id="TIGR00325">
    <property type="entry name" value="lpxC"/>
    <property type="match status" value="1"/>
</dbReference>
<dbReference type="PANTHER" id="PTHR33694">
    <property type="entry name" value="UDP-3-O-ACYL-N-ACETYLGLUCOSAMINE DEACETYLASE 1, MITOCHONDRIAL-RELATED"/>
    <property type="match status" value="1"/>
</dbReference>
<dbReference type="PANTHER" id="PTHR33694:SF1">
    <property type="entry name" value="UDP-3-O-ACYL-N-ACETYLGLUCOSAMINE DEACETYLASE 1, MITOCHONDRIAL-RELATED"/>
    <property type="match status" value="1"/>
</dbReference>
<dbReference type="Pfam" id="PF03331">
    <property type="entry name" value="LpxC"/>
    <property type="match status" value="1"/>
</dbReference>
<dbReference type="SUPFAM" id="SSF54211">
    <property type="entry name" value="Ribosomal protein S5 domain 2-like"/>
    <property type="match status" value="2"/>
</dbReference>
<feature type="chain" id="PRO_1000122778" description="UDP-3-O-acyl-N-acetylglucosamine deacetylase">
    <location>
        <begin position="1"/>
        <end position="307"/>
    </location>
</feature>
<feature type="active site" description="Proton donor" evidence="1">
    <location>
        <position position="268"/>
    </location>
</feature>
<feature type="binding site" evidence="1">
    <location>
        <position position="78"/>
    </location>
    <ligand>
        <name>Zn(2+)</name>
        <dbReference type="ChEBI" id="CHEBI:29105"/>
    </ligand>
</feature>
<feature type="binding site" evidence="1">
    <location>
        <position position="241"/>
    </location>
    <ligand>
        <name>Zn(2+)</name>
        <dbReference type="ChEBI" id="CHEBI:29105"/>
    </ligand>
</feature>
<feature type="binding site" evidence="1">
    <location>
        <position position="245"/>
    </location>
    <ligand>
        <name>Zn(2+)</name>
        <dbReference type="ChEBI" id="CHEBI:29105"/>
    </ligand>
</feature>
<sequence>MLQQRTIKTITRAVGVGLHSGQRVELTLRPAQPDTGIVFRRVDLPEPVDIPISAEAVTDTRMASTIGTGGAKVHTVEHLMSAIAGLGLDNIYIDITAEEVPILDGSSASFVFLLQSAGIELQKAPKRFIRVIRPVEVREGEGQNLKWARFDPYHGFKLRFEIDFAHPAVDSTGQCVEFDMGEDNYTRDIARARTFGFTKDVEMLRSHGLALGGGMDNAIVMDDYKVLNSDGLRYDDEFAKHKILDAIGDLYLIGRPLLAAYSAFRSGHGMNNQLLRALLAQPDAWELVSFDSERQAPKGFAQPARAW</sequence>
<organism>
    <name type="scientific">Delftia acidovorans (strain DSM 14801 / SPH-1)</name>
    <dbReference type="NCBI Taxonomy" id="398578"/>
    <lineage>
        <taxon>Bacteria</taxon>
        <taxon>Pseudomonadati</taxon>
        <taxon>Pseudomonadota</taxon>
        <taxon>Betaproteobacteria</taxon>
        <taxon>Burkholderiales</taxon>
        <taxon>Comamonadaceae</taxon>
        <taxon>Delftia</taxon>
    </lineage>
</organism>
<comment type="function">
    <text evidence="1">Catalyzes the hydrolysis of UDP-3-O-myristoyl-N-acetylglucosamine to form UDP-3-O-myristoylglucosamine and acetate, the committed step in lipid A biosynthesis.</text>
</comment>
<comment type="catalytic activity">
    <reaction evidence="1">
        <text>a UDP-3-O-[(3R)-3-hydroxyacyl]-N-acetyl-alpha-D-glucosamine + H2O = a UDP-3-O-[(3R)-3-hydroxyacyl]-alpha-D-glucosamine + acetate</text>
        <dbReference type="Rhea" id="RHEA:67816"/>
        <dbReference type="ChEBI" id="CHEBI:15377"/>
        <dbReference type="ChEBI" id="CHEBI:30089"/>
        <dbReference type="ChEBI" id="CHEBI:137740"/>
        <dbReference type="ChEBI" id="CHEBI:173225"/>
        <dbReference type="EC" id="3.5.1.108"/>
    </reaction>
</comment>
<comment type="cofactor">
    <cofactor evidence="1">
        <name>Zn(2+)</name>
        <dbReference type="ChEBI" id="CHEBI:29105"/>
    </cofactor>
</comment>
<comment type="pathway">
    <text evidence="1">Glycolipid biosynthesis; lipid IV(A) biosynthesis; lipid IV(A) from (3R)-3-hydroxytetradecanoyl-[acyl-carrier-protein] and UDP-N-acetyl-alpha-D-glucosamine: step 2/6.</text>
</comment>
<comment type="similarity">
    <text evidence="1">Belongs to the LpxC family.</text>
</comment>
<gene>
    <name evidence="1" type="primary">lpxC</name>
    <name type="ordered locus">Daci_1476</name>
</gene>
<protein>
    <recommendedName>
        <fullName evidence="1">UDP-3-O-acyl-N-acetylglucosamine deacetylase</fullName>
        <shortName evidence="1">UDP-3-O-acyl-GlcNAc deacetylase</shortName>
        <ecNumber evidence="1">3.5.1.108</ecNumber>
    </recommendedName>
    <alternativeName>
        <fullName evidence="1">UDP-3-O-[R-3-hydroxymyristoyl]-N-acetylglucosamine deacetylase</fullName>
    </alternativeName>
</protein>
<reference key="1">
    <citation type="submission" date="2007-11" db="EMBL/GenBank/DDBJ databases">
        <title>Complete sequence of Delftia acidovorans DSM 14801 / SPH-1.</title>
        <authorList>
            <person name="Copeland A."/>
            <person name="Lucas S."/>
            <person name="Lapidus A."/>
            <person name="Barry K."/>
            <person name="Glavina del Rio T."/>
            <person name="Dalin E."/>
            <person name="Tice H."/>
            <person name="Pitluck S."/>
            <person name="Lowry S."/>
            <person name="Clum A."/>
            <person name="Schmutz J."/>
            <person name="Larimer F."/>
            <person name="Land M."/>
            <person name="Hauser L."/>
            <person name="Kyrpides N."/>
            <person name="Kim E."/>
            <person name="Schleheck D."/>
            <person name="Richardson P."/>
        </authorList>
    </citation>
    <scope>NUCLEOTIDE SEQUENCE [LARGE SCALE GENOMIC DNA]</scope>
    <source>
        <strain>DSM 14801 / SPH-1</strain>
    </source>
</reference>
<evidence type="ECO:0000255" key="1">
    <source>
        <dbReference type="HAMAP-Rule" id="MF_00388"/>
    </source>
</evidence>